<gene>
    <name evidence="1" type="primary">dut</name>
    <name type="ordered locus">SBO_3642</name>
</gene>
<dbReference type="EC" id="3.6.1.23" evidence="1"/>
<dbReference type="EMBL" id="CP000036">
    <property type="protein sequence ID" value="ABB68122.1"/>
    <property type="molecule type" value="Genomic_DNA"/>
</dbReference>
<dbReference type="SMR" id="Q31UY6"/>
<dbReference type="KEGG" id="sbo:SBO_3642"/>
<dbReference type="HOGENOM" id="CLU_068508_1_1_6"/>
<dbReference type="UniPathway" id="UPA00610">
    <property type="reaction ID" value="UER00666"/>
</dbReference>
<dbReference type="Proteomes" id="UP000007067">
    <property type="component" value="Chromosome"/>
</dbReference>
<dbReference type="GO" id="GO:0004170">
    <property type="term" value="F:dUTP diphosphatase activity"/>
    <property type="evidence" value="ECO:0007669"/>
    <property type="project" value="UniProtKB-UniRule"/>
</dbReference>
<dbReference type="GO" id="GO:0000287">
    <property type="term" value="F:magnesium ion binding"/>
    <property type="evidence" value="ECO:0007669"/>
    <property type="project" value="UniProtKB-UniRule"/>
</dbReference>
<dbReference type="GO" id="GO:0006226">
    <property type="term" value="P:dUMP biosynthetic process"/>
    <property type="evidence" value="ECO:0007669"/>
    <property type="project" value="UniProtKB-UniRule"/>
</dbReference>
<dbReference type="GO" id="GO:0046081">
    <property type="term" value="P:dUTP catabolic process"/>
    <property type="evidence" value="ECO:0007669"/>
    <property type="project" value="InterPro"/>
</dbReference>
<dbReference type="CDD" id="cd07557">
    <property type="entry name" value="trimeric_dUTPase"/>
    <property type="match status" value="1"/>
</dbReference>
<dbReference type="FunFam" id="2.70.40.10:FF:000002">
    <property type="entry name" value="dUTP diphosphatase"/>
    <property type="match status" value="1"/>
</dbReference>
<dbReference type="Gene3D" id="2.70.40.10">
    <property type="match status" value="1"/>
</dbReference>
<dbReference type="HAMAP" id="MF_00116">
    <property type="entry name" value="dUTPase_bact"/>
    <property type="match status" value="1"/>
</dbReference>
<dbReference type="InterPro" id="IPR008181">
    <property type="entry name" value="dUTPase"/>
</dbReference>
<dbReference type="InterPro" id="IPR029054">
    <property type="entry name" value="dUTPase-like"/>
</dbReference>
<dbReference type="InterPro" id="IPR036157">
    <property type="entry name" value="dUTPase-like_sf"/>
</dbReference>
<dbReference type="InterPro" id="IPR033704">
    <property type="entry name" value="dUTPase_trimeric"/>
</dbReference>
<dbReference type="NCBIfam" id="TIGR00576">
    <property type="entry name" value="dut"/>
    <property type="match status" value="1"/>
</dbReference>
<dbReference type="NCBIfam" id="NF001862">
    <property type="entry name" value="PRK00601.1"/>
    <property type="match status" value="1"/>
</dbReference>
<dbReference type="PANTHER" id="PTHR11241">
    <property type="entry name" value="DEOXYURIDINE 5'-TRIPHOSPHATE NUCLEOTIDOHYDROLASE"/>
    <property type="match status" value="1"/>
</dbReference>
<dbReference type="PANTHER" id="PTHR11241:SF0">
    <property type="entry name" value="DEOXYURIDINE 5'-TRIPHOSPHATE NUCLEOTIDOHYDROLASE"/>
    <property type="match status" value="1"/>
</dbReference>
<dbReference type="Pfam" id="PF00692">
    <property type="entry name" value="dUTPase"/>
    <property type="match status" value="1"/>
</dbReference>
<dbReference type="SUPFAM" id="SSF51283">
    <property type="entry name" value="dUTPase-like"/>
    <property type="match status" value="1"/>
</dbReference>
<protein>
    <recommendedName>
        <fullName evidence="1">Deoxyuridine 5'-triphosphate nucleotidohydrolase</fullName>
        <shortName evidence="1">dUTPase</shortName>
        <ecNumber evidence="1">3.6.1.23</ecNumber>
    </recommendedName>
    <alternativeName>
        <fullName evidence="1">dUTP pyrophosphatase</fullName>
    </alternativeName>
</protein>
<keyword id="KW-0378">Hydrolase</keyword>
<keyword id="KW-0460">Magnesium</keyword>
<keyword id="KW-0479">Metal-binding</keyword>
<keyword id="KW-0546">Nucleotide metabolism</keyword>
<accession>Q31UY6</accession>
<evidence type="ECO:0000255" key="1">
    <source>
        <dbReference type="HAMAP-Rule" id="MF_00116"/>
    </source>
</evidence>
<proteinExistence type="inferred from homology"/>
<organism>
    <name type="scientific">Shigella boydii serotype 4 (strain Sb227)</name>
    <dbReference type="NCBI Taxonomy" id="300268"/>
    <lineage>
        <taxon>Bacteria</taxon>
        <taxon>Pseudomonadati</taxon>
        <taxon>Pseudomonadota</taxon>
        <taxon>Gammaproteobacteria</taxon>
        <taxon>Enterobacterales</taxon>
        <taxon>Enterobacteriaceae</taxon>
        <taxon>Shigella</taxon>
    </lineage>
</organism>
<feature type="chain" id="PRO_0000231428" description="Deoxyuridine 5'-triphosphate nucleotidohydrolase">
    <location>
        <begin position="1"/>
        <end position="151"/>
    </location>
</feature>
<feature type="binding site" evidence="1">
    <location>
        <begin position="70"/>
        <end position="72"/>
    </location>
    <ligand>
        <name>substrate</name>
    </ligand>
</feature>
<feature type="binding site" evidence="1">
    <location>
        <position position="83"/>
    </location>
    <ligand>
        <name>substrate</name>
    </ligand>
</feature>
<feature type="binding site" evidence="1">
    <location>
        <begin position="87"/>
        <end position="89"/>
    </location>
    <ligand>
        <name>substrate</name>
    </ligand>
</feature>
<feature type="binding site" evidence="1">
    <location>
        <position position="97"/>
    </location>
    <ligand>
        <name>substrate</name>
    </ligand>
</feature>
<name>DUT_SHIBS</name>
<sequence>MKKIDVKILDPRVGKEFPLPTYATSGSAGLDLRACLDDAVELAPGDTTLVPTGLAIHIADPSLAAMMLPRSGLGHKHGIVLGNLVGLIDSDYQGQLMISVWNRGQDSFTIQPGERIAQMIFVPVVQAEFNLVEDFDATDRGEGGFGHSGRQ</sequence>
<comment type="function">
    <text evidence="1">This enzyme is involved in nucleotide metabolism: it produces dUMP, the immediate precursor of thymidine nucleotides and it decreases the intracellular concentration of dUTP so that uracil cannot be incorporated into DNA.</text>
</comment>
<comment type="catalytic activity">
    <reaction evidence="1">
        <text>dUTP + H2O = dUMP + diphosphate + H(+)</text>
        <dbReference type="Rhea" id="RHEA:10248"/>
        <dbReference type="ChEBI" id="CHEBI:15377"/>
        <dbReference type="ChEBI" id="CHEBI:15378"/>
        <dbReference type="ChEBI" id="CHEBI:33019"/>
        <dbReference type="ChEBI" id="CHEBI:61555"/>
        <dbReference type="ChEBI" id="CHEBI:246422"/>
        <dbReference type="EC" id="3.6.1.23"/>
    </reaction>
</comment>
<comment type="cofactor">
    <cofactor evidence="1">
        <name>Mg(2+)</name>
        <dbReference type="ChEBI" id="CHEBI:18420"/>
    </cofactor>
</comment>
<comment type="pathway">
    <text evidence="1">Pyrimidine metabolism; dUMP biosynthesis; dUMP from dCTP (dUTP route): step 2/2.</text>
</comment>
<comment type="similarity">
    <text evidence="1">Belongs to the dUTPase family.</text>
</comment>
<reference key="1">
    <citation type="journal article" date="2005" name="Nucleic Acids Res.">
        <title>Genome dynamics and diversity of Shigella species, the etiologic agents of bacillary dysentery.</title>
        <authorList>
            <person name="Yang F."/>
            <person name="Yang J."/>
            <person name="Zhang X."/>
            <person name="Chen L."/>
            <person name="Jiang Y."/>
            <person name="Yan Y."/>
            <person name="Tang X."/>
            <person name="Wang J."/>
            <person name="Xiong Z."/>
            <person name="Dong J."/>
            <person name="Xue Y."/>
            <person name="Zhu Y."/>
            <person name="Xu X."/>
            <person name="Sun L."/>
            <person name="Chen S."/>
            <person name="Nie H."/>
            <person name="Peng J."/>
            <person name="Xu J."/>
            <person name="Wang Y."/>
            <person name="Yuan Z."/>
            <person name="Wen Y."/>
            <person name="Yao Z."/>
            <person name="Shen Y."/>
            <person name="Qiang B."/>
            <person name="Hou Y."/>
            <person name="Yu J."/>
            <person name="Jin Q."/>
        </authorList>
    </citation>
    <scope>NUCLEOTIDE SEQUENCE [LARGE SCALE GENOMIC DNA]</scope>
    <source>
        <strain>Sb227</strain>
    </source>
</reference>